<name>MNMA_BURL3</name>
<gene>
    <name evidence="1" type="primary">mnmA</name>
    <name type="ordered locus">Bcep18194_A3784</name>
</gene>
<reference key="1">
    <citation type="submission" date="2005-10" db="EMBL/GenBank/DDBJ databases">
        <title>Complete sequence of chromosome 1 of Burkholderia sp. 383.</title>
        <authorList>
            <consortium name="US DOE Joint Genome Institute"/>
            <person name="Copeland A."/>
            <person name="Lucas S."/>
            <person name="Lapidus A."/>
            <person name="Barry K."/>
            <person name="Detter J.C."/>
            <person name="Glavina T."/>
            <person name="Hammon N."/>
            <person name="Israni S."/>
            <person name="Pitluck S."/>
            <person name="Chain P."/>
            <person name="Malfatti S."/>
            <person name="Shin M."/>
            <person name="Vergez L."/>
            <person name="Schmutz J."/>
            <person name="Larimer F."/>
            <person name="Land M."/>
            <person name="Kyrpides N."/>
            <person name="Lykidis A."/>
            <person name="Richardson P."/>
        </authorList>
    </citation>
    <scope>NUCLEOTIDE SEQUENCE [LARGE SCALE GENOMIC DNA]</scope>
    <source>
        <strain>ATCC 17760 / DSM 23089 / LMG 22485 / NCIMB 9086 / R18194 / 383</strain>
    </source>
</reference>
<feature type="chain" id="PRO_0000349563" description="tRNA-specific 2-thiouridylase MnmA">
    <location>
        <begin position="1"/>
        <end position="383"/>
    </location>
</feature>
<feature type="region of interest" description="Interaction with target base in tRNA" evidence="1">
    <location>
        <begin position="95"/>
        <end position="97"/>
    </location>
</feature>
<feature type="region of interest" description="Interaction with tRNA" evidence="1">
    <location>
        <begin position="146"/>
        <end position="148"/>
    </location>
</feature>
<feature type="region of interest" description="Interaction with tRNA" evidence="1">
    <location>
        <begin position="308"/>
        <end position="309"/>
    </location>
</feature>
<feature type="active site" description="Nucleophile" evidence="1">
    <location>
        <position position="100"/>
    </location>
</feature>
<feature type="active site" description="Cysteine persulfide intermediate" evidence="1">
    <location>
        <position position="196"/>
    </location>
</feature>
<feature type="binding site" evidence="1">
    <location>
        <begin position="9"/>
        <end position="16"/>
    </location>
    <ligand>
        <name>ATP</name>
        <dbReference type="ChEBI" id="CHEBI:30616"/>
    </ligand>
</feature>
<feature type="binding site" evidence="1">
    <location>
        <position position="35"/>
    </location>
    <ligand>
        <name>ATP</name>
        <dbReference type="ChEBI" id="CHEBI:30616"/>
    </ligand>
</feature>
<feature type="binding site" evidence="1">
    <location>
        <position position="124"/>
    </location>
    <ligand>
        <name>ATP</name>
        <dbReference type="ChEBI" id="CHEBI:30616"/>
    </ligand>
</feature>
<feature type="site" description="Interaction with tRNA" evidence="1">
    <location>
        <position position="125"/>
    </location>
</feature>
<feature type="site" description="Interaction with tRNA" evidence="1">
    <location>
        <position position="346"/>
    </location>
</feature>
<feature type="disulfide bond" description="Alternate" evidence="1">
    <location>
        <begin position="100"/>
        <end position="196"/>
    </location>
</feature>
<accession>Q39JI1</accession>
<comment type="function">
    <text evidence="1">Catalyzes the 2-thiolation of uridine at the wobble position (U34) of tRNA, leading to the formation of s(2)U34.</text>
</comment>
<comment type="catalytic activity">
    <reaction evidence="1">
        <text>S-sulfanyl-L-cysteinyl-[protein] + uridine(34) in tRNA + AH2 + ATP = 2-thiouridine(34) in tRNA + L-cysteinyl-[protein] + A + AMP + diphosphate + H(+)</text>
        <dbReference type="Rhea" id="RHEA:47032"/>
        <dbReference type="Rhea" id="RHEA-COMP:10131"/>
        <dbReference type="Rhea" id="RHEA-COMP:11726"/>
        <dbReference type="Rhea" id="RHEA-COMP:11727"/>
        <dbReference type="Rhea" id="RHEA-COMP:11728"/>
        <dbReference type="ChEBI" id="CHEBI:13193"/>
        <dbReference type="ChEBI" id="CHEBI:15378"/>
        <dbReference type="ChEBI" id="CHEBI:17499"/>
        <dbReference type="ChEBI" id="CHEBI:29950"/>
        <dbReference type="ChEBI" id="CHEBI:30616"/>
        <dbReference type="ChEBI" id="CHEBI:33019"/>
        <dbReference type="ChEBI" id="CHEBI:61963"/>
        <dbReference type="ChEBI" id="CHEBI:65315"/>
        <dbReference type="ChEBI" id="CHEBI:87170"/>
        <dbReference type="ChEBI" id="CHEBI:456215"/>
        <dbReference type="EC" id="2.8.1.13"/>
    </reaction>
</comment>
<comment type="subcellular location">
    <subcellularLocation>
        <location evidence="1">Cytoplasm</location>
    </subcellularLocation>
</comment>
<comment type="similarity">
    <text evidence="1">Belongs to the MnmA/TRMU family.</text>
</comment>
<organism>
    <name type="scientific">Burkholderia lata (strain ATCC 17760 / DSM 23089 / LMG 22485 / NCIMB 9086 / R18194 / 383)</name>
    <dbReference type="NCBI Taxonomy" id="482957"/>
    <lineage>
        <taxon>Bacteria</taxon>
        <taxon>Pseudomonadati</taxon>
        <taxon>Pseudomonadota</taxon>
        <taxon>Betaproteobacteria</taxon>
        <taxon>Burkholderiales</taxon>
        <taxon>Burkholderiaceae</taxon>
        <taxon>Burkholderia</taxon>
        <taxon>Burkholderia cepacia complex</taxon>
    </lineage>
</organism>
<keyword id="KW-0067">ATP-binding</keyword>
<keyword id="KW-0963">Cytoplasm</keyword>
<keyword id="KW-1015">Disulfide bond</keyword>
<keyword id="KW-0547">Nucleotide-binding</keyword>
<keyword id="KW-0694">RNA-binding</keyword>
<keyword id="KW-0808">Transferase</keyword>
<keyword id="KW-0819">tRNA processing</keyword>
<keyword id="KW-0820">tRNA-binding</keyword>
<sequence length="383" mass="41707">MSKRRVVVGMSGGVDSSVTAWLLKEQGYDVVGLFMKNWEDDDDGEYCSTRQDWIDVVSVADLIGIDVEAVNFAAEYKDRVFAEFLREYSAGRTPNPDVLCNAEIKFKAFLDHAMSLDAEMIATGHYARVRERDGRFELLKAYDHTKDQSYFLHRLNQAQLSKTMFPLGEIPKTKVREIAAQIGLPNAKKKDSTGICFIGERPFRDFLNRYLPTKPGPMKTPDGKIVGEHIGLAFYTFGQRKGIGLGGSKSGNGDPWFVAAKDIASNTLYVVQGHDHPWLLARELVAGNVSWVAGEPPAEGFACGAKTRYRQADAACAFGAATPGPAGEARFSLAFDDAQWAVTPGQSAVLYDGEICLGGGIIESAVIGQPGQTAPARALAEAR</sequence>
<proteinExistence type="inferred from homology"/>
<dbReference type="EC" id="2.8.1.13" evidence="1"/>
<dbReference type="EMBL" id="CP000151">
    <property type="protein sequence ID" value="ABB07385.1"/>
    <property type="molecule type" value="Genomic_DNA"/>
</dbReference>
<dbReference type="RefSeq" id="WP_011350972.1">
    <property type="nucleotide sequence ID" value="NC_007510.1"/>
</dbReference>
<dbReference type="SMR" id="Q39JI1"/>
<dbReference type="GeneID" id="45093697"/>
<dbReference type="KEGG" id="bur:Bcep18194_A3784"/>
<dbReference type="PATRIC" id="fig|482957.22.peg.645"/>
<dbReference type="HOGENOM" id="CLU_035188_1_0_4"/>
<dbReference type="Proteomes" id="UP000002705">
    <property type="component" value="Chromosome 1"/>
</dbReference>
<dbReference type="GO" id="GO:0005737">
    <property type="term" value="C:cytoplasm"/>
    <property type="evidence" value="ECO:0007669"/>
    <property type="project" value="UniProtKB-SubCell"/>
</dbReference>
<dbReference type="GO" id="GO:0005524">
    <property type="term" value="F:ATP binding"/>
    <property type="evidence" value="ECO:0007669"/>
    <property type="project" value="UniProtKB-KW"/>
</dbReference>
<dbReference type="GO" id="GO:0000049">
    <property type="term" value="F:tRNA binding"/>
    <property type="evidence" value="ECO:0007669"/>
    <property type="project" value="UniProtKB-KW"/>
</dbReference>
<dbReference type="GO" id="GO:0103016">
    <property type="term" value="F:tRNA-uridine 2-sulfurtransferase activity"/>
    <property type="evidence" value="ECO:0007669"/>
    <property type="project" value="UniProtKB-EC"/>
</dbReference>
<dbReference type="GO" id="GO:0002143">
    <property type="term" value="P:tRNA wobble position uridine thiolation"/>
    <property type="evidence" value="ECO:0007669"/>
    <property type="project" value="TreeGrafter"/>
</dbReference>
<dbReference type="CDD" id="cd01998">
    <property type="entry name" value="MnmA_TRMU-like"/>
    <property type="match status" value="1"/>
</dbReference>
<dbReference type="FunFam" id="2.30.30.280:FF:000001">
    <property type="entry name" value="tRNA-specific 2-thiouridylase MnmA"/>
    <property type="match status" value="1"/>
</dbReference>
<dbReference type="FunFam" id="2.40.30.10:FF:000023">
    <property type="entry name" value="tRNA-specific 2-thiouridylase MnmA"/>
    <property type="match status" value="1"/>
</dbReference>
<dbReference type="FunFam" id="3.40.50.620:FF:000004">
    <property type="entry name" value="tRNA-specific 2-thiouridylase MnmA"/>
    <property type="match status" value="1"/>
</dbReference>
<dbReference type="Gene3D" id="2.30.30.280">
    <property type="entry name" value="Adenine nucleotide alpha hydrolases-like domains"/>
    <property type="match status" value="1"/>
</dbReference>
<dbReference type="Gene3D" id="3.40.50.620">
    <property type="entry name" value="HUPs"/>
    <property type="match status" value="1"/>
</dbReference>
<dbReference type="Gene3D" id="2.40.30.10">
    <property type="entry name" value="Translation factors"/>
    <property type="match status" value="1"/>
</dbReference>
<dbReference type="HAMAP" id="MF_00144">
    <property type="entry name" value="tRNA_thiouridyl_MnmA"/>
    <property type="match status" value="1"/>
</dbReference>
<dbReference type="InterPro" id="IPR004506">
    <property type="entry name" value="MnmA-like"/>
</dbReference>
<dbReference type="InterPro" id="IPR046885">
    <property type="entry name" value="MnmA-like_C"/>
</dbReference>
<dbReference type="InterPro" id="IPR046884">
    <property type="entry name" value="MnmA-like_central"/>
</dbReference>
<dbReference type="InterPro" id="IPR023382">
    <property type="entry name" value="MnmA-like_central_sf"/>
</dbReference>
<dbReference type="InterPro" id="IPR014729">
    <property type="entry name" value="Rossmann-like_a/b/a_fold"/>
</dbReference>
<dbReference type="NCBIfam" id="NF001138">
    <property type="entry name" value="PRK00143.1"/>
    <property type="match status" value="1"/>
</dbReference>
<dbReference type="NCBIfam" id="TIGR00420">
    <property type="entry name" value="trmU"/>
    <property type="match status" value="1"/>
</dbReference>
<dbReference type="PANTHER" id="PTHR11933:SF5">
    <property type="entry name" value="MITOCHONDRIAL TRNA-SPECIFIC 2-THIOURIDYLASE 1"/>
    <property type="match status" value="1"/>
</dbReference>
<dbReference type="PANTHER" id="PTHR11933">
    <property type="entry name" value="TRNA 5-METHYLAMINOMETHYL-2-THIOURIDYLATE -METHYLTRANSFERASE"/>
    <property type="match status" value="1"/>
</dbReference>
<dbReference type="Pfam" id="PF03054">
    <property type="entry name" value="tRNA_Me_trans"/>
    <property type="match status" value="1"/>
</dbReference>
<dbReference type="Pfam" id="PF20258">
    <property type="entry name" value="tRNA_Me_trans_C"/>
    <property type="match status" value="1"/>
</dbReference>
<dbReference type="Pfam" id="PF20259">
    <property type="entry name" value="tRNA_Me_trans_M"/>
    <property type="match status" value="1"/>
</dbReference>
<dbReference type="SUPFAM" id="SSF52402">
    <property type="entry name" value="Adenine nucleotide alpha hydrolases-like"/>
    <property type="match status" value="1"/>
</dbReference>
<protein>
    <recommendedName>
        <fullName evidence="1">tRNA-specific 2-thiouridylase MnmA</fullName>
        <ecNumber evidence="1">2.8.1.13</ecNumber>
    </recommendedName>
</protein>
<evidence type="ECO:0000255" key="1">
    <source>
        <dbReference type="HAMAP-Rule" id="MF_00144"/>
    </source>
</evidence>